<name>SYY_BORBZ</name>
<feature type="chain" id="PRO_1000189261" description="Tyrosine--tRNA ligase">
    <location>
        <begin position="1"/>
        <end position="405"/>
    </location>
</feature>
<feature type="domain" description="S4 RNA-binding" evidence="1">
    <location>
        <begin position="340"/>
        <end position="405"/>
    </location>
</feature>
<feature type="short sequence motif" description="'HIGH' region">
    <location>
        <begin position="40"/>
        <end position="49"/>
    </location>
</feature>
<feature type="short sequence motif" description="'KMSKS' region">
    <location>
        <begin position="226"/>
        <end position="230"/>
    </location>
</feature>
<feature type="binding site" evidence="1">
    <location>
        <position position="35"/>
    </location>
    <ligand>
        <name>L-tyrosine</name>
        <dbReference type="ChEBI" id="CHEBI:58315"/>
    </ligand>
</feature>
<feature type="binding site" evidence="1">
    <location>
        <position position="166"/>
    </location>
    <ligand>
        <name>L-tyrosine</name>
        <dbReference type="ChEBI" id="CHEBI:58315"/>
    </ligand>
</feature>
<feature type="binding site" evidence="1">
    <location>
        <position position="170"/>
    </location>
    <ligand>
        <name>L-tyrosine</name>
        <dbReference type="ChEBI" id="CHEBI:58315"/>
    </ligand>
</feature>
<feature type="binding site" evidence="1">
    <location>
        <position position="229"/>
    </location>
    <ligand>
        <name>ATP</name>
        <dbReference type="ChEBI" id="CHEBI:30616"/>
    </ligand>
</feature>
<protein>
    <recommendedName>
        <fullName evidence="1">Tyrosine--tRNA ligase</fullName>
        <ecNumber evidence="1">6.1.1.1</ecNumber>
    </recommendedName>
    <alternativeName>
        <fullName evidence="1">Tyrosyl-tRNA synthetase</fullName>
        <shortName evidence="1">TyrRS</shortName>
    </alternativeName>
</protein>
<evidence type="ECO:0000255" key="1">
    <source>
        <dbReference type="HAMAP-Rule" id="MF_02006"/>
    </source>
</evidence>
<proteinExistence type="inferred from homology"/>
<reference key="1">
    <citation type="journal article" date="2011" name="J. Bacteriol.">
        <title>Whole-genome sequences of thirteen isolates of Borrelia burgdorferi.</title>
        <authorList>
            <person name="Schutzer S.E."/>
            <person name="Fraser-Liggett C.M."/>
            <person name="Casjens S.R."/>
            <person name="Qiu W.G."/>
            <person name="Dunn J.J."/>
            <person name="Mongodin E.F."/>
            <person name="Luft B.J."/>
        </authorList>
    </citation>
    <scope>NUCLEOTIDE SEQUENCE [LARGE SCALE GENOMIC DNA]</scope>
    <source>
        <strain>ZS7</strain>
    </source>
</reference>
<keyword id="KW-0030">Aminoacyl-tRNA synthetase</keyword>
<keyword id="KW-0067">ATP-binding</keyword>
<keyword id="KW-0963">Cytoplasm</keyword>
<keyword id="KW-0436">Ligase</keyword>
<keyword id="KW-0547">Nucleotide-binding</keyword>
<keyword id="KW-0648">Protein biosynthesis</keyword>
<keyword id="KW-0694">RNA-binding</keyword>
<dbReference type="EC" id="6.1.1.1" evidence="1"/>
<dbReference type="EMBL" id="CP001205">
    <property type="protein sequence ID" value="ACK75062.1"/>
    <property type="molecule type" value="Genomic_DNA"/>
</dbReference>
<dbReference type="RefSeq" id="WP_002656396.1">
    <property type="nucleotide sequence ID" value="NC_011728.1"/>
</dbReference>
<dbReference type="SMR" id="B7J1U2"/>
<dbReference type="GeneID" id="56567798"/>
<dbReference type="KEGG" id="bbz:BbuZS7_0372"/>
<dbReference type="HOGENOM" id="CLU_024003_0_3_12"/>
<dbReference type="Proteomes" id="UP000006901">
    <property type="component" value="Chromosome"/>
</dbReference>
<dbReference type="GO" id="GO:0005829">
    <property type="term" value="C:cytosol"/>
    <property type="evidence" value="ECO:0007669"/>
    <property type="project" value="TreeGrafter"/>
</dbReference>
<dbReference type="GO" id="GO:0005524">
    <property type="term" value="F:ATP binding"/>
    <property type="evidence" value="ECO:0007669"/>
    <property type="project" value="UniProtKB-UniRule"/>
</dbReference>
<dbReference type="GO" id="GO:0003723">
    <property type="term" value="F:RNA binding"/>
    <property type="evidence" value="ECO:0007669"/>
    <property type="project" value="UniProtKB-KW"/>
</dbReference>
<dbReference type="GO" id="GO:0004831">
    <property type="term" value="F:tyrosine-tRNA ligase activity"/>
    <property type="evidence" value="ECO:0007669"/>
    <property type="project" value="UniProtKB-UniRule"/>
</dbReference>
<dbReference type="GO" id="GO:0006437">
    <property type="term" value="P:tyrosyl-tRNA aminoacylation"/>
    <property type="evidence" value="ECO:0007669"/>
    <property type="project" value="UniProtKB-UniRule"/>
</dbReference>
<dbReference type="CDD" id="cd00165">
    <property type="entry name" value="S4"/>
    <property type="match status" value="1"/>
</dbReference>
<dbReference type="CDD" id="cd00805">
    <property type="entry name" value="TyrRS_core"/>
    <property type="match status" value="1"/>
</dbReference>
<dbReference type="FunFam" id="1.10.240.10:FF:000001">
    <property type="entry name" value="Tyrosine--tRNA ligase"/>
    <property type="match status" value="1"/>
</dbReference>
<dbReference type="Gene3D" id="3.40.50.620">
    <property type="entry name" value="HUPs"/>
    <property type="match status" value="1"/>
</dbReference>
<dbReference type="Gene3D" id="3.10.290.10">
    <property type="entry name" value="RNA-binding S4 domain"/>
    <property type="match status" value="1"/>
</dbReference>
<dbReference type="Gene3D" id="1.10.240.10">
    <property type="entry name" value="Tyrosyl-Transfer RNA Synthetase"/>
    <property type="match status" value="1"/>
</dbReference>
<dbReference type="HAMAP" id="MF_02006">
    <property type="entry name" value="Tyr_tRNA_synth_type1"/>
    <property type="match status" value="1"/>
</dbReference>
<dbReference type="InterPro" id="IPR002305">
    <property type="entry name" value="aa-tRNA-synth_Ic"/>
</dbReference>
<dbReference type="InterPro" id="IPR014729">
    <property type="entry name" value="Rossmann-like_a/b/a_fold"/>
</dbReference>
<dbReference type="InterPro" id="IPR002942">
    <property type="entry name" value="S4_RNA-bd"/>
</dbReference>
<dbReference type="InterPro" id="IPR036986">
    <property type="entry name" value="S4_RNA-bd_sf"/>
</dbReference>
<dbReference type="InterPro" id="IPR054608">
    <property type="entry name" value="SYY-like_C"/>
</dbReference>
<dbReference type="InterPro" id="IPR002307">
    <property type="entry name" value="Tyr-tRNA-ligase"/>
</dbReference>
<dbReference type="InterPro" id="IPR024088">
    <property type="entry name" value="Tyr-tRNA-ligase_bac-type"/>
</dbReference>
<dbReference type="InterPro" id="IPR024107">
    <property type="entry name" value="Tyr-tRNA-ligase_bac_1"/>
</dbReference>
<dbReference type="NCBIfam" id="TIGR00234">
    <property type="entry name" value="tyrS"/>
    <property type="match status" value="1"/>
</dbReference>
<dbReference type="PANTHER" id="PTHR11766:SF0">
    <property type="entry name" value="TYROSINE--TRNA LIGASE, MITOCHONDRIAL"/>
    <property type="match status" value="1"/>
</dbReference>
<dbReference type="PANTHER" id="PTHR11766">
    <property type="entry name" value="TYROSYL-TRNA SYNTHETASE"/>
    <property type="match status" value="1"/>
</dbReference>
<dbReference type="Pfam" id="PF22421">
    <property type="entry name" value="SYY_C-terminal"/>
    <property type="match status" value="1"/>
</dbReference>
<dbReference type="Pfam" id="PF00579">
    <property type="entry name" value="tRNA-synt_1b"/>
    <property type="match status" value="1"/>
</dbReference>
<dbReference type="PRINTS" id="PR01040">
    <property type="entry name" value="TRNASYNTHTYR"/>
</dbReference>
<dbReference type="SMART" id="SM00363">
    <property type="entry name" value="S4"/>
    <property type="match status" value="1"/>
</dbReference>
<dbReference type="SUPFAM" id="SSF55174">
    <property type="entry name" value="Alpha-L RNA-binding motif"/>
    <property type="match status" value="1"/>
</dbReference>
<dbReference type="SUPFAM" id="SSF52374">
    <property type="entry name" value="Nucleotidylyl transferase"/>
    <property type="match status" value="1"/>
</dbReference>
<dbReference type="PROSITE" id="PS50889">
    <property type="entry name" value="S4"/>
    <property type="match status" value="1"/>
</dbReference>
<accession>B7J1U2</accession>
<comment type="function">
    <text evidence="1">Catalyzes the attachment of tyrosine to tRNA(Tyr) in a two-step reaction: tyrosine is first activated by ATP to form Tyr-AMP and then transferred to the acceptor end of tRNA(Tyr).</text>
</comment>
<comment type="catalytic activity">
    <reaction evidence="1">
        <text>tRNA(Tyr) + L-tyrosine + ATP = L-tyrosyl-tRNA(Tyr) + AMP + diphosphate + H(+)</text>
        <dbReference type="Rhea" id="RHEA:10220"/>
        <dbReference type="Rhea" id="RHEA-COMP:9706"/>
        <dbReference type="Rhea" id="RHEA-COMP:9707"/>
        <dbReference type="ChEBI" id="CHEBI:15378"/>
        <dbReference type="ChEBI" id="CHEBI:30616"/>
        <dbReference type="ChEBI" id="CHEBI:33019"/>
        <dbReference type="ChEBI" id="CHEBI:58315"/>
        <dbReference type="ChEBI" id="CHEBI:78442"/>
        <dbReference type="ChEBI" id="CHEBI:78536"/>
        <dbReference type="ChEBI" id="CHEBI:456215"/>
        <dbReference type="EC" id="6.1.1.1"/>
    </reaction>
</comment>
<comment type="subunit">
    <text evidence="1">Homodimer.</text>
</comment>
<comment type="subcellular location">
    <subcellularLocation>
        <location evidence="1">Cytoplasm</location>
    </subcellularLocation>
</comment>
<comment type="similarity">
    <text evidence="1">Belongs to the class-I aminoacyl-tRNA synthetase family. TyrS type 1 subfamily.</text>
</comment>
<gene>
    <name evidence="1" type="primary">tyrS</name>
    <name type="ordered locus">BbuZS7_0372</name>
</gene>
<sequence length="405" mass="46363">MNLALSLLHKRGFLKQCTSLKVLSDLMDREKIVFYAGVDATSSSLHIGHLIPFLAMMHLRQHGHMPIVLIGDSTAKIGDPSGKSEMRKILSSEEIGNNALLIKNQLQRITKFTSECFIHNSNWLDNLNYIEFLRDVGMHFSVNRMLSFETYKRRMDFGLSFIEFNYQLLQSYDYYMLNKIKNCRLQIGGDDQWGNIISGVDLIRKKNGSETFGLTFPLITRSDGKKMGKSEKGAVYLDSNLFSIYDFYQYFRNTSDSDVKTFLYLFTFLEEDEIELISNFKGNSLNKAKEILAFEITKIVHGEAEALKVQEASFAAFRGSGDRSNIPFFKFSFSSLKEEILLVDLMLDSKIVPSKSEGRRLIDSGGVYINGKRVESQSHLLTKKDFNNNEVELRVGKKKFLRIVI</sequence>
<organism>
    <name type="scientific">Borreliella burgdorferi (strain ZS7)</name>
    <name type="common">Borrelia burgdorferi</name>
    <dbReference type="NCBI Taxonomy" id="445985"/>
    <lineage>
        <taxon>Bacteria</taxon>
        <taxon>Pseudomonadati</taxon>
        <taxon>Spirochaetota</taxon>
        <taxon>Spirochaetia</taxon>
        <taxon>Spirochaetales</taxon>
        <taxon>Borreliaceae</taxon>
        <taxon>Borreliella</taxon>
    </lineage>
</organism>